<name>PIWL2_DANRE</name>
<accession>A2CEI6</accession>
<accession>A1Z661</accession>
<accession>B5A7D8</accession>
<accession>B5U367</accession>
<proteinExistence type="evidence at protein level"/>
<evidence type="ECO:0000250" key="1">
    <source>
        <dbReference type="UniProtKB" id="A8D8P8"/>
    </source>
</evidence>
<evidence type="ECO:0000250" key="2">
    <source>
        <dbReference type="UniProtKB" id="Q8CDG1"/>
    </source>
</evidence>
<evidence type="ECO:0000250" key="3">
    <source>
        <dbReference type="UniProtKB" id="Q9JMB7"/>
    </source>
</evidence>
<evidence type="ECO:0000255" key="4">
    <source>
        <dbReference type="PROSITE-ProRule" id="PRU00142"/>
    </source>
</evidence>
<evidence type="ECO:0000255" key="5">
    <source>
        <dbReference type="PROSITE-ProRule" id="PRU00150"/>
    </source>
</evidence>
<evidence type="ECO:0000256" key="6">
    <source>
        <dbReference type="SAM" id="MobiDB-lite"/>
    </source>
</evidence>
<evidence type="ECO:0000269" key="7">
    <source>
    </source>
</evidence>
<evidence type="ECO:0000303" key="8">
    <source>
    </source>
</evidence>
<evidence type="ECO:0000305" key="9"/>
<feature type="chain" id="PRO_0000367287" description="Piwi-like protein 2">
    <location>
        <begin position="1"/>
        <end position="1046"/>
    </location>
</feature>
<feature type="domain" description="PAZ" evidence="4">
    <location>
        <begin position="462"/>
        <end position="575"/>
    </location>
</feature>
<feature type="domain" description="Piwi" evidence="5">
    <location>
        <begin position="741"/>
        <end position="1032"/>
    </location>
</feature>
<feature type="region of interest" description="Disordered" evidence="6">
    <location>
        <begin position="1"/>
        <end position="35"/>
    </location>
</feature>
<feature type="compositionally biased region" description="Pro residues" evidence="6">
    <location>
        <begin position="1"/>
        <end position="12"/>
    </location>
</feature>
<feature type="compositionally biased region" description="Polar residues" evidence="6">
    <location>
        <begin position="19"/>
        <end position="31"/>
    </location>
</feature>
<feature type="active site" evidence="1">
    <location>
        <position position="818"/>
    </location>
</feature>
<feature type="active site" evidence="1">
    <location>
        <position position="856"/>
    </location>
</feature>
<feature type="active site" evidence="1">
    <location>
        <position position="888"/>
    </location>
</feature>
<feature type="active site" evidence="1">
    <location>
        <position position="1021"/>
    </location>
</feature>
<feature type="mutagenesis site" description="In hu2087; males develop normally and are fertile but females are sterile due to defects in meiosis." evidence="7">
    <original>L</original>
    <variation>P</variation>
    <location>
        <position position="590"/>
    </location>
</feature>
<feature type="sequence conflict" description="In Ref. 2; ABM46842 and 3; ACF35261." evidence="9" ref="2 3">
    <original>P</original>
    <variation>L</variation>
    <location>
        <position position="59"/>
    </location>
</feature>
<feature type="sequence conflict" description="In Ref. 1; ACH96370." evidence="9" ref="1">
    <original>M</original>
    <variation>V</variation>
    <location>
        <position position="90"/>
    </location>
</feature>
<feature type="sequence conflict" description="In Ref. 1; ACH96370." evidence="9" ref="1">
    <original>A</original>
    <variation>V</variation>
    <location>
        <position position="129"/>
    </location>
</feature>
<feature type="sequence conflict" description="In Ref. 1; ACH96370." evidence="9" ref="1">
    <original>E</original>
    <variation>Q</variation>
    <location>
        <position position="132"/>
    </location>
</feature>
<feature type="sequence conflict" description="In Ref. 2; ABM46842 and 3; ACF35261." evidence="9" ref="2 3">
    <original>A</original>
    <variation>S</variation>
    <location>
        <position position="262"/>
    </location>
</feature>
<feature type="sequence conflict" description="In Ref. 2; ABM46842." evidence="9" ref="2">
    <original>T</original>
    <variation>A</variation>
    <location>
        <position position="734"/>
    </location>
</feature>
<feature type="sequence conflict" description="In Ref. 2; ABM46842." evidence="9" ref="2">
    <original>N</original>
    <variation>D</variation>
    <location>
        <position position="806"/>
    </location>
</feature>
<feature type="sequence conflict" description="In Ref. 2; ABM46842." evidence="9" ref="2">
    <original>H</original>
    <variation>R</variation>
    <location>
        <position position="820"/>
    </location>
</feature>
<gene>
    <name type="primary">piwil2</name>
    <name evidence="8" type="synonym">zili</name>
    <name type="ORF">si:dkey-88f5.1</name>
</gene>
<organism>
    <name type="scientific">Danio rerio</name>
    <name type="common">Zebrafish</name>
    <name type="synonym">Brachydanio rerio</name>
    <dbReference type="NCBI Taxonomy" id="7955"/>
    <lineage>
        <taxon>Eukaryota</taxon>
        <taxon>Metazoa</taxon>
        <taxon>Chordata</taxon>
        <taxon>Craniata</taxon>
        <taxon>Vertebrata</taxon>
        <taxon>Euteleostomi</taxon>
        <taxon>Actinopterygii</taxon>
        <taxon>Neopterygii</taxon>
        <taxon>Teleostei</taxon>
        <taxon>Ostariophysi</taxon>
        <taxon>Cypriniformes</taxon>
        <taxon>Danionidae</taxon>
        <taxon>Danioninae</taxon>
        <taxon>Danio</taxon>
    </lineage>
</organism>
<sequence>MDPKRPTFPSPPGVIRAPWQQSTEDQSQLLDQPSLGRARGLIMPIDEPLPGRGRAFSVPGEMPVRFGRGITQSIAAEPLVGMARGVRLPMEEGGFGRGRGFLLPTPEPTVGIGRGAAIGPVPTLDIQKAEVEEKMPELQAEVAPTVAKVGSPGTGSSLVSMFRGLGIEPGKTWGRGAAPVGRGAAGDMGADLQPKPTIIGASLTPEREEVRSEESISFLGRGFTGFGRAAMPHMTVGRGPIGPLSPSPSVAAPFSLISASSASEDAPVAPGTPPKVEVKIETVKEPLQKIGTKGSPIPIGSNYIPICCKNDAVFQYHVTFTPNVESLSMRFGMMKEHRPTTGEVVAFDGSILYLPKRLEEVVHLKAERKTDNQEIDIKIQLTKILPPSSDLCIPFYNVVLRRVMKILGLKLVGRNHYDPNAVVILGKHRLQVWPGYSTSIKHTDGGLYLVVDVSHKVLRNDSVLDVMNLIYQGSRESFQDECTKEFVGSIVITRYNNRTYRIDDIEWSKSPKDTFTLADGSVTTFVDYYRKNYGITIKELDQPLLIHRPKERSRPGGKVITGEILLLPELSFMTGIPEKMRKDFRAMKDLTMHINVGAQQHTQSLKQLLHNINSNNEALSELGRWGLSISQEILVTQGRTLPSETICLHSASFVTSPAVDWSRELVRDPSISTVPLNCWAVFYPRRATDQAEELVTTFSRVAGPMGMRVERPIRVELRDDRTETFVKSIHSQLTSEPRVQLVVCIMTGNRDDLYSAIKKLCCIQSPVPSQAINVRTISQPQKLRSVAQKILLQINCKLGGELWTVNVPLKYLMVIGVDVHHDTSKKSRSVMGFVASLNSMLTKWYSRVTFQMPNEEIINGFRVCLLAALQKYYEVNHAFPEKIVIYRDGVSDGQLKTVEHYEIPQILKCFETIPNYEPKLAFIVVQKRISTTLYSYGSDHFGTPSPGTVLDHTVTNRDWVDFYLMAHSIRQGCGLPTHYITVYNTANLTPDHLQRLTFKMCHLYWNWPGTIRVPAPCKYAHKLAFLSGQYLHSEPAIQLSEKLFFL</sequence>
<keyword id="KW-0090">Biological rhythms</keyword>
<keyword id="KW-0963">Cytoplasm</keyword>
<keyword id="KW-0217">Developmental protein</keyword>
<keyword id="KW-0221">Differentiation</keyword>
<keyword id="KW-0255">Endonuclease</keyword>
<keyword id="KW-0378">Hydrolase</keyword>
<keyword id="KW-0469">Meiosis</keyword>
<keyword id="KW-0479">Metal-binding</keyword>
<keyword id="KW-0488">Methylation</keyword>
<keyword id="KW-0540">Nuclease</keyword>
<keyword id="KW-0539">Nucleus</keyword>
<keyword id="KW-0896">Oogenesis</keyword>
<keyword id="KW-1185">Reference proteome</keyword>
<keyword id="KW-0694">RNA-binding</keyword>
<keyword id="KW-0943">RNA-mediated gene silencing</keyword>
<keyword id="KW-0810">Translation regulation</keyword>
<dbReference type="EC" id="3.1.26.-" evidence="2"/>
<dbReference type="EMBL" id="FJ168029">
    <property type="protein sequence ID" value="ACH96370.1"/>
    <property type="molecule type" value="mRNA"/>
</dbReference>
<dbReference type="EMBL" id="EF186090">
    <property type="protein sequence ID" value="ABM46842.2"/>
    <property type="molecule type" value="mRNA"/>
</dbReference>
<dbReference type="EMBL" id="EU817487">
    <property type="protein sequence ID" value="ACF35261.1"/>
    <property type="molecule type" value="mRNA"/>
</dbReference>
<dbReference type="EMBL" id="CR450719">
    <property type="protein sequence ID" value="CAM16455.1"/>
    <property type="status" value="ALT_SEQ"/>
    <property type="molecule type" value="Genomic_DNA"/>
</dbReference>
<dbReference type="RefSeq" id="NP_001073668.2">
    <property type="nucleotide sequence ID" value="NM_001080199.3"/>
</dbReference>
<dbReference type="RefSeq" id="NP_001352553.1">
    <property type="nucleotide sequence ID" value="NM_001365624.1"/>
</dbReference>
<dbReference type="RefSeq" id="XP_017211652.1">
    <property type="nucleotide sequence ID" value="XM_017356163.1"/>
</dbReference>
<dbReference type="SMR" id="A2CEI6"/>
<dbReference type="FunCoup" id="A2CEI6">
    <property type="interactions" value="347"/>
</dbReference>
<dbReference type="IntAct" id="A2CEI6">
    <property type="interactions" value="21"/>
</dbReference>
<dbReference type="MINT" id="A2CEI6"/>
<dbReference type="STRING" id="7955.ENSDARP00000114406"/>
<dbReference type="iPTMnet" id="A2CEI6"/>
<dbReference type="PaxDb" id="7955-ENSDARP00000114406"/>
<dbReference type="PeptideAtlas" id="A2CEI6"/>
<dbReference type="Ensembl" id="ENSDART00000090695">
    <property type="protein sequence ID" value="ENSDARP00000085128"/>
    <property type="gene ID" value="ENSDARG00000062601"/>
</dbReference>
<dbReference type="Ensembl" id="ENSDART00000162071">
    <property type="protein sequence ID" value="ENSDARP00000139021"/>
    <property type="gene ID" value="ENSDARG00000062601"/>
</dbReference>
<dbReference type="GeneID" id="572134"/>
<dbReference type="eggNOG" id="KOG1042">
    <property type="taxonomic scope" value="Eukaryota"/>
</dbReference>
<dbReference type="InParanoid" id="A2CEI6"/>
<dbReference type="OrthoDB" id="445936at2759"/>
<dbReference type="PhylomeDB" id="A2CEI6"/>
<dbReference type="TreeFam" id="TF354206"/>
<dbReference type="PRO" id="PR:A2CEI6"/>
<dbReference type="Proteomes" id="UP000000437">
    <property type="component" value="Chromosome 5"/>
</dbReference>
<dbReference type="Bgee" id="ENSDARG00000062601">
    <property type="expression patterns" value="Expressed in testis and 23 other cell types or tissues"/>
</dbReference>
<dbReference type="ExpressionAtlas" id="A2CEI6">
    <property type="expression patterns" value="baseline"/>
</dbReference>
<dbReference type="GO" id="GO:0005737">
    <property type="term" value="C:cytoplasm"/>
    <property type="evidence" value="ECO:0000314"/>
    <property type="project" value="UniProtKB"/>
</dbReference>
<dbReference type="GO" id="GO:0005634">
    <property type="term" value="C:nucleus"/>
    <property type="evidence" value="ECO:0000314"/>
    <property type="project" value="UniProtKB"/>
</dbReference>
<dbReference type="GO" id="GO:0043186">
    <property type="term" value="C:P granule"/>
    <property type="evidence" value="ECO:0000314"/>
    <property type="project" value="UniProtKB"/>
</dbReference>
<dbReference type="GO" id="GO:1990923">
    <property type="term" value="C:PET complex"/>
    <property type="evidence" value="ECO:0000250"/>
    <property type="project" value="UniProtKB"/>
</dbReference>
<dbReference type="GO" id="GO:0071546">
    <property type="term" value="C:pi-body"/>
    <property type="evidence" value="ECO:0000250"/>
    <property type="project" value="UniProtKB"/>
</dbReference>
<dbReference type="GO" id="GO:0046872">
    <property type="term" value="F:metal ion binding"/>
    <property type="evidence" value="ECO:0007669"/>
    <property type="project" value="UniProtKB-KW"/>
</dbReference>
<dbReference type="GO" id="GO:0034584">
    <property type="term" value="F:piRNA binding"/>
    <property type="evidence" value="ECO:0000314"/>
    <property type="project" value="UniProtKB"/>
</dbReference>
<dbReference type="GO" id="GO:0004521">
    <property type="term" value="F:RNA endonuclease activity"/>
    <property type="evidence" value="ECO:0000250"/>
    <property type="project" value="UniProtKB"/>
</dbReference>
<dbReference type="GO" id="GO:0007276">
    <property type="term" value="P:gamete generation"/>
    <property type="evidence" value="ECO:0000315"/>
    <property type="project" value="UniProtKB"/>
</dbReference>
<dbReference type="GO" id="GO:0030718">
    <property type="term" value="P:germ-line stem cell population maintenance"/>
    <property type="evidence" value="ECO:0000315"/>
    <property type="project" value="UniProtKB"/>
</dbReference>
<dbReference type="GO" id="GO:0051321">
    <property type="term" value="P:meiotic cell cycle"/>
    <property type="evidence" value="ECO:0000315"/>
    <property type="project" value="UniProtKB"/>
</dbReference>
<dbReference type="GO" id="GO:0060392">
    <property type="term" value="P:negative regulation of SMAD protein signal transduction"/>
    <property type="evidence" value="ECO:0000353"/>
    <property type="project" value="ZFIN"/>
</dbReference>
<dbReference type="GO" id="GO:0048477">
    <property type="term" value="P:oogenesis"/>
    <property type="evidence" value="ECO:0007669"/>
    <property type="project" value="UniProtKB-KW"/>
</dbReference>
<dbReference type="GO" id="GO:0034587">
    <property type="term" value="P:piRNA processing"/>
    <property type="evidence" value="ECO:0000314"/>
    <property type="project" value="UniProtKB"/>
</dbReference>
<dbReference type="GO" id="GO:0010628">
    <property type="term" value="P:positive regulation of gene expression"/>
    <property type="evidence" value="ECO:0000316"/>
    <property type="project" value="ZFIN"/>
</dbReference>
<dbReference type="GO" id="GO:0006417">
    <property type="term" value="P:regulation of translation"/>
    <property type="evidence" value="ECO:0007669"/>
    <property type="project" value="UniProtKB-KW"/>
</dbReference>
<dbReference type="GO" id="GO:0031047">
    <property type="term" value="P:regulatory ncRNA-mediated gene silencing"/>
    <property type="evidence" value="ECO:0000250"/>
    <property type="project" value="UniProtKB"/>
</dbReference>
<dbReference type="GO" id="GO:0048511">
    <property type="term" value="P:rhythmic process"/>
    <property type="evidence" value="ECO:0007669"/>
    <property type="project" value="UniProtKB-KW"/>
</dbReference>
<dbReference type="GO" id="GO:0140965">
    <property type="term" value="P:secondary piRNA processing"/>
    <property type="evidence" value="ECO:0000250"/>
    <property type="project" value="UniProtKB"/>
</dbReference>
<dbReference type="GO" id="GO:0007283">
    <property type="term" value="P:spermatogenesis"/>
    <property type="evidence" value="ECO:0000250"/>
    <property type="project" value="UniProtKB"/>
</dbReference>
<dbReference type="GO" id="GO:0141005">
    <property type="term" value="P:transposable element silencing by heterochromatin formation"/>
    <property type="evidence" value="ECO:0000250"/>
    <property type="project" value="UniProtKB"/>
</dbReference>
<dbReference type="GO" id="GO:0141196">
    <property type="term" value="P:transposable element silencing by piRNA-mediated DNA methylation"/>
    <property type="evidence" value="ECO:0000250"/>
    <property type="project" value="UniProtKB"/>
</dbReference>
<dbReference type="CDD" id="cd02845">
    <property type="entry name" value="PAZ_piwi_like"/>
    <property type="match status" value="1"/>
</dbReference>
<dbReference type="CDD" id="cd04658">
    <property type="entry name" value="Piwi_piwi-like_Euk"/>
    <property type="match status" value="1"/>
</dbReference>
<dbReference type="FunFam" id="3.40.50.2300:FF:000141">
    <property type="entry name" value="piwi-like protein 2 isoform X1"/>
    <property type="match status" value="1"/>
</dbReference>
<dbReference type="FunFam" id="3.30.420.10:FF:000014">
    <property type="entry name" value="Piwi-like RNA-mediated gene silencing 1"/>
    <property type="match status" value="1"/>
</dbReference>
<dbReference type="FunFam" id="2.170.260.10:FF:000003">
    <property type="entry name" value="Piwi-like RNA-mediated gene silencing 2"/>
    <property type="match status" value="1"/>
</dbReference>
<dbReference type="Gene3D" id="3.40.50.2300">
    <property type="match status" value="1"/>
</dbReference>
<dbReference type="Gene3D" id="2.170.260.10">
    <property type="entry name" value="paz domain"/>
    <property type="match status" value="1"/>
</dbReference>
<dbReference type="Gene3D" id="3.30.420.10">
    <property type="entry name" value="Ribonuclease H-like superfamily/Ribonuclease H"/>
    <property type="match status" value="1"/>
</dbReference>
<dbReference type="InterPro" id="IPR014811">
    <property type="entry name" value="ArgoL1"/>
</dbReference>
<dbReference type="InterPro" id="IPR003100">
    <property type="entry name" value="PAZ_dom"/>
</dbReference>
<dbReference type="InterPro" id="IPR036085">
    <property type="entry name" value="PAZ_dom_sf"/>
</dbReference>
<dbReference type="InterPro" id="IPR003165">
    <property type="entry name" value="Piwi"/>
</dbReference>
<dbReference type="InterPro" id="IPR012337">
    <property type="entry name" value="RNaseH-like_sf"/>
</dbReference>
<dbReference type="InterPro" id="IPR036397">
    <property type="entry name" value="RNaseH_sf"/>
</dbReference>
<dbReference type="PANTHER" id="PTHR22891">
    <property type="entry name" value="EUKARYOTIC TRANSLATION INITIATION FACTOR 2C"/>
    <property type="match status" value="1"/>
</dbReference>
<dbReference type="Pfam" id="PF08699">
    <property type="entry name" value="ArgoL1"/>
    <property type="match status" value="1"/>
</dbReference>
<dbReference type="Pfam" id="PF02170">
    <property type="entry name" value="PAZ"/>
    <property type="match status" value="1"/>
</dbReference>
<dbReference type="Pfam" id="PF02171">
    <property type="entry name" value="Piwi"/>
    <property type="match status" value="1"/>
</dbReference>
<dbReference type="Pfam" id="PF23278">
    <property type="entry name" value="Piwi_N"/>
    <property type="match status" value="1"/>
</dbReference>
<dbReference type="SMART" id="SM00949">
    <property type="entry name" value="PAZ"/>
    <property type="match status" value="1"/>
</dbReference>
<dbReference type="SMART" id="SM00950">
    <property type="entry name" value="Piwi"/>
    <property type="match status" value="1"/>
</dbReference>
<dbReference type="SUPFAM" id="SSF101690">
    <property type="entry name" value="PAZ domain"/>
    <property type="match status" value="1"/>
</dbReference>
<dbReference type="SUPFAM" id="SSF53098">
    <property type="entry name" value="Ribonuclease H-like"/>
    <property type="match status" value="1"/>
</dbReference>
<dbReference type="PROSITE" id="PS50821">
    <property type="entry name" value="PAZ"/>
    <property type="match status" value="1"/>
</dbReference>
<dbReference type="PROSITE" id="PS50822">
    <property type="entry name" value="PIWI"/>
    <property type="match status" value="1"/>
</dbReference>
<protein>
    <recommendedName>
        <fullName>Piwi-like protein 2</fullName>
        <ecNumber evidence="2">3.1.26.-</ecNumber>
    </recommendedName>
</protein>
<reference key="1">
    <citation type="journal article" date="2008" name="EMBO J.">
        <title>Zili is required for germ cell differentiation and meiosis in zebrafish.</title>
        <authorList>
            <person name="Houwing S."/>
            <person name="Berezikov E."/>
            <person name="Ketting R.F."/>
        </authorList>
    </citation>
    <scope>NUCLEOTIDE SEQUENCE [MRNA]</scope>
    <scope>FUNCTION</scope>
    <scope>SUBCELLULAR LOCATION</scope>
    <scope>RNA-BINDING</scope>
    <scope>TISSUE SPECIFICITY</scope>
    <scope>DISRUPTION PHENOTYPE</scope>
    <scope>MUTAGENESIS OF LEU-590</scope>
    <source>
        <strain>TL</strain>
    </source>
</reference>
<reference key="2">
    <citation type="submission" date="2007-01" db="EMBL/GenBank/DDBJ databases">
        <title>Identification of zebrafish Piwil2-Zili gene.</title>
        <authorList>
            <person name="Sun H."/>
            <person name="Li N."/>
            <person name="Yan N."/>
            <person name="Zhang L."/>
            <person name="Liu Y."/>
            <person name="Wang X."/>
            <person name="Ma Y."/>
        </authorList>
    </citation>
    <scope>NUCLEOTIDE SEQUENCE [MRNA]</scope>
    <source>
        <strain>Tuebingen</strain>
    </source>
</reference>
<reference key="3">
    <citation type="submission" date="2008-06" db="EMBL/GenBank/DDBJ databases">
        <title>Expression and localization of zebrafish piwi-like 2.</title>
        <authorList>
            <person name="Honda J."/>
            <person name="Beh L."/>
            <person name="Wong Q.Y."/>
            <person name="Orban L."/>
            <person name="Kai T."/>
        </authorList>
    </citation>
    <scope>NUCLEOTIDE SEQUENCE [MRNA]</scope>
    <source>
        <strain>AB</strain>
    </source>
</reference>
<reference key="4">
    <citation type="journal article" date="2013" name="Nature">
        <title>The zebrafish reference genome sequence and its relationship to the human genome.</title>
        <authorList>
            <person name="Howe K."/>
            <person name="Clark M.D."/>
            <person name="Torroja C.F."/>
            <person name="Torrance J."/>
            <person name="Berthelot C."/>
            <person name="Muffato M."/>
            <person name="Collins J.E."/>
            <person name="Humphray S."/>
            <person name="McLaren K."/>
            <person name="Matthews L."/>
            <person name="McLaren S."/>
            <person name="Sealy I."/>
            <person name="Caccamo M."/>
            <person name="Churcher C."/>
            <person name="Scott C."/>
            <person name="Barrett J.C."/>
            <person name="Koch R."/>
            <person name="Rauch G.J."/>
            <person name="White S."/>
            <person name="Chow W."/>
            <person name="Kilian B."/>
            <person name="Quintais L.T."/>
            <person name="Guerra-Assuncao J.A."/>
            <person name="Zhou Y."/>
            <person name="Gu Y."/>
            <person name="Yen J."/>
            <person name="Vogel J.H."/>
            <person name="Eyre T."/>
            <person name="Redmond S."/>
            <person name="Banerjee R."/>
            <person name="Chi J."/>
            <person name="Fu B."/>
            <person name="Langley E."/>
            <person name="Maguire S.F."/>
            <person name="Laird G.K."/>
            <person name="Lloyd D."/>
            <person name="Kenyon E."/>
            <person name="Donaldson S."/>
            <person name="Sehra H."/>
            <person name="Almeida-King J."/>
            <person name="Loveland J."/>
            <person name="Trevanion S."/>
            <person name="Jones M."/>
            <person name="Quail M."/>
            <person name="Willey D."/>
            <person name="Hunt A."/>
            <person name="Burton J."/>
            <person name="Sims S."/>
            <person name="McLay K."/>
            <person name="Plumb B."/>
            <person name="Davis J."/>
            <person name="Clee C."/>
            <person name="Oliver K."/>
            <person name="Clark R."/>
            <person name="Riddle C."/>
            <person name="Elliot D."/>
            <person name="Threadgold G."/>
            <person name="Harden G."/>
            <person name="Ware D."/>
            <person name="Begum S."/>
            <person name="Mortimore B."/>
            <person name="Kerry G."/>
            <person name="Heath P."/>
            <person name="Phillimore B."/>
            <person name="Tracey A."/>
            <person name="Corby N."/>
            <person name="Dunn M."/>
            <person name="Johnson C."/>
            <person name="Wood J."/>
            <person name="Clark S."/>
            <person name="Pelan S."/>
            <person name="Griffiths G."/>
            <person name="Smith M."/>
            <person name="Glithero R."/>
            <person name="Howden P."/>
            <person name="Barker N."/>
            <person name="Lloyd C."/>
            <person name="Stevens C."/>
            <person name="Harley J."/>
            <person name="Holt K."/>
            <person name="Panagiotidis G."/>
            <person name="Lovell J."/>
            <person name="Beasley H."/>
            <person name="Henderson C."/>
            <person name="Gordon D."/>
            <person name="Auger K."/>
            <person name="Wright D."/>
            <person name="Collins J."/>
            <person name="Raisen C."/>
            <person name="Dyer L."/>
            <person name="Leung K."/>
            <person name="Robertson L."/>
            <person name="Ambridge K."/>
            <person name="Leongamornlert D."/>
            <person name="McGuire S."/>
            <person name="Gilderthorp R."/>
            <person name="Griffiths C."/>
            <person name="Manthravadi D."/>
            <person name="Nichol S."/>
            <person name="Barker G."/>
            <person name="Whitehead S."/>
            <person name="Kay M."/>
            <person name="Brown J."/>
            <person name="Murnane C."/>
            <person name="Gray E."/>
            <person name="Humphries M."/>
            <person name="Sycamore N."/>
            <person name="Barker D."/>
            <person name="Saunders D."/>
            <person name="Wallis J."/>
            <person name="Babbage A."/>
            <person name="Hammond S."/>
            <person name="Mashreghi-Mohammadi M."/>
            <person name="Barr L."/>
            <person name="Martin S."/>
            <person name="Wray P."/>
            <person name="Ellington A."/>
            <person name="Matthews N."/>
            <person name="Ellwood M."/>
            <person name="Woodmansey R."/>
            <person name="Clark G."/>
            <person name="Cooper J."/>
            <person name="Tromans A."/>
            <person name="Grafham D."/>
            <person name="Skuce C."/>
            <person name="Pandian R."/>
            <person name="Andrews R."/>
            <person name="Harrison E."/>
            <person name="Kimberley A."/>
            <person name="Garnett J."/>
            <person name="Fosker N."/>
            <person name="Hall R."/>
            <person name="Garner P."/>
            <person name="Kelly D."/>
            <person name="Bird C."/>
            <person name="Palmer S."/>
            <person name="Gehring I."/>
            <person name="Berger A."/>
            <person name="Dooley C.M."/>
            <person name="Ersan-Urun Z."/>
            <person name="Eser C."/>
            <person name="Geiger H."/>
            <person name="Geisler M."/>
            <person name="Karotki L."/>
            <person name="Kirn A."/>
            <person name="Konantz J."/>
            <person name="Konantz M."/>
            <person name="Oberlander M."/>
            <person name="Rudolph-Geiger S."/>
            <person name="Teucke M."/>
            <person name="Lanz C."/>
            <person name="Raddatz G."/>
            <person name="Osoegawa K."/>
            <person name="Zhu B."/>
            <person name="Rapp A."/>
            <person name="Widaa S."/>
            <person name="Langford C."/>
            <person name="Yang F."/>
            <person name="Schuster S.C."/>
            <person name="Carter N.P."/>
            <person name="Harrow J."/>
            <person name="Ning Z."/>
            <person name="Herrero J."/>
            <person name="Searle S.M."/>
            <person name="Enright A."/>
            <person name="Geisler R."/>
            <person name="Plasterk R.H."/>
            <person name="Lee C."/>
            <person name="Westerfield M."/>
            <person name="de Jong P.J."/>
            <person name="Zon L.I."/>
            <person name="Postlethwait J.H."/>
            <person name="Nusslein-Volhard C."/>
            <person name="Hubbard T.J."/>
            <person name="Roest Crollius H."/>
            <person name="Rogers J."/>
            <person name="Stemple D.L."/>
        </authorList>
    </citation>
    <scope>NUCLEOTIDE SEQUENCE [LARGE SCALE GENOMIC DNA]</scope>
    <source>
        <strain>Tuebingen</strain>
    </source>
</reference>
<comment type="function">
    <text evidence="2 7">Endoribonuclease that plays a central role during spermatogenesis by repressing transposable elements and preventing their mobilization, which is essential for the germline integrity (PubMed:18833190). Plays an essential role in germ cell differentiation and meiosis, independently of the function in transposable elements repression (PubMed:18833190). Acts via the piRNA metabolic process, which mediates the repression of transposable elements during meiosis by forming complexes composed of piRNAs and Piwi proteins and govern the methylation and subsequent repression of transposons (PubMed:18833190). During piRNA biosynthesis, plays a key role in the piRNA amplification loop, also named ping-pong amplification cycle, by acting as a 'slicer-competent' piRNA endoribonuclease that cleaves primary piRNAs, which are then loaded onto 'slicer-incompetent' piwil4 (By similarity). Piwil2 slicing produces a pre-miRNA intermediate, which is then processed in mature piRNAs, and as well as a 16 nucleotide by-product that is degraded (By similarity). Required for piwil4/miwi2 nuclear localization and association with secondary piRNAs antisense (By similarity). Represses circadian rhythms by promoting the stability and activity of core clock components BMAL1 and CLOCK (By similarity).</text>
</comment>
<comment type="cofactor">
    <cofactor evidence="3">
        <name>Mg(2+)</name>
        <dbReference type="ChEBI" id="CHEBI:18420"/>
    </cofactor>
</comment>
<comment type="subunit">
    <text evidence="2">Component of the PET complex.</text>
</comment>
<comment type="interaction">
    <interactant intactId="EBI-7011808">
        <id>A2CEI6</id>
    </interactant>
    <interactant intactId="EBI-7011788">
        <id>Q58EK5</id>
        <label>tdrd1</label>
    </interactant>
    <organismsDiffer>false</organismsDiffer>
    <experiments>9</experiments>
</comment>
<comment type="subcellular location">
    <subcellularLocation>
        <location evidence="7">Cytoplasm</location>
    </subcellularLocation>
    <subcellularLocation>
        <location evidence="7">Nucleus</location>
    </subcellularLocation>
    <text evidence="2">Probable component of the meiotic nuage, also named P granule, a germ-cell-specific organelle required to repress transposon activity during meiosis (By similarity). In mitotic and early meiotic cells of ovary, it is predominantly cytoplasmic. In primary oocytes, it is found in a granular distribution around the nucleus. Later, in maturing oocytes, it localizes to the nucleus. In testis, it is present in the cytoplasm of mitotic and meiotic germ cells, where a distinct granular distribution around the nucleus is observed.</text>
</comment>
<comment type="tissue specificity">
    <text evidence="7">Detected in primordial germ cells (PGCs) from 3 dpf. In adult, it is found in both the female and male gonad. In the ovary, it is present in all stages of germ cell differentiation. In testis, it is present in mitotic and meiotic germ cells. No protein has been detected in the fully differentiated sperm cell.</text>
</comment>
<comment type="PTM">
    <text evidence="2">Methylated on arginine residues; required for the interaction with Tudor domain-containing protein and subsequent localization to the meiotic nuage, also named P granule.</text>
</comment>
<comment type="disruption phenotype">
    <text evidence="7">Progressive loss of germ cells due to apoptosis from 6 weeks of age.</text>
</comment>
<comment type="similarity">
    <text evidence="9">Belongs to the argonaute family. Piwi subfamily.</text>
</comment>
<comment type="sequence caution" evidence="9">
    <conflict type="erroneous gene model prediction">
        <sequence resource="EMBL-CDS" id="CAM16455"/>
    </conflict>
</comment>